<reference key="1">
    <citation type="journal article" date="1998" name="Nature">
        <title>The genome sequence of Rickettsia prowazekii and the origin of mitochondria.</title>
        <authorList>
            <person name="Andersson S.G.E."/>
            <person name="Zomorodipour A."/>
            <person name="Andersson J.O."/>
            <person name="Sicheritz-Ponten T."/>
            <person name="Alsmark U.C.M."/>
            <person name="Podowski R.M."/>
            <person name="Naeslund A.K."/>
            <person name="Eriksson A.-S."/>
            <person name="Winkler H.H."/>
            <person name="Kurland C.G."/>
        </authorList>
    </citation>
    <scope>NUCLEOTIDE SEQUENCE [LARGE SCALE GENOMIC DNA]</scope>
    <source>
        <strain>Madrid E</strain>
    </source>
</reference>
<keyword id="KW-1003">Cell membrane</keyword>
<keyword id="KW-0472">Membrane</keyword>
<keyword id="KW-1185">Reference proteome</keyword>
<keyword id="KW-1278">Translocase</keyword>
<keyword id="KW-0812">Transmembrane</keyword>
<keyword id="KW-1133">Transmembrane helix</keyword>
<gene>
    <name type="primary">ctaE</name>
    <name type="synonym">coxC</name>
    <name type="ordered locus">RP191</name>
</gene>
<dbReference type="EC" id="7.1.1.9"/>
<dbReference type="EMBL" id="AJ235270">
    <property type="protein sequence ID" value="CAA14657.1"/>
    <property type="molecule type" value="Genomic_DNA"/>
</dbReference>
<dbReference type="PIR" id="B71730">
    <property type="entry name" value="B71730"/>
</dbReference>
<dbReference type="RefSeq" id="NP_220580.1">
    <property type="nucleotide sequence ID" value="NC_000963.1"/>
</dbReference>
<dbReference type="RefSeq" id="WP_010886229.1">
    <property type="nucleotide sequence ID" value="NC_000963.1"/>
</dbReference>
<dbReference type="SMR" id="Q9ZDX3"/>
<dbReference type="STRING" id="272947.gene:17555273"/>
<dbReference type="EnsemblBacteria" id="CAA14657">
    <property type="protein sequence ID" value="CAA14657"/>
    <property type="gene ID" value="CAA14657"/>
</dbReference>
<dbReference type="KEGG" id="rpr:RP191"/>
<dbReference type="PATRIC" id="fig|272947.5.peg.198"/>
<dbReference type="eggNOG" id="COG1845">
    <property type="taxonomic scope" value="Bacteria"/>
</dbReference>
<dbReference type="HOGENOM" id="CLU_044071_0_0_5"/>
<dbReference type="OrthoDB" id="9810850at2"/>
<dbReference type="Proteomes" id="UP000002480">
    <property type="component" value="Chromosome"/>
</dbReference>
<dbReference type="GO" id="GO:0005886">
    <property type="term" value="C:plasma membrane"/>
    <property type="evidence" value="ECO:0007669"/>
    <property type="project" value="UniProtKB-SubCell"/>
</dbReference>
<dbReference type="GO" id="GO:0004129">
    <property type="term" value="F:cytochrome-c oxidase activity"/>
    <property type="evidence" value="ECO:0007669"/>
    <property type="project" value="UniProtKB-EC"/>
</dbReference>
<dbReference type="GO" id="GO:0019646">
    <property type="term" value="P:aerobic electron transport chain"/>
    <property type="evidence" value="ECO:0007669"/>
    <property type="project" value="InterPro"/>
</dbReference>
<dbReference type="CDD" id="cd01665">
    <property type="entry name" value="Cyt_c_Oxidase_III"/>
    <property type="match status" value="1"/>
</dbReference>
<dbReference type="FunFam" id="1.10.287.70:FF:000082">
    <property type="entry name" value="Cytochrome c oxidase subunit 3"/>
    <property type="match status" value="1"/>
</dbReference>
<dbReference type="FunFam" id="1.20.120.80:FF:000003">
    <property type="entry name" value="Cytochrome c oxidase subunit 3"/>
    <property type="match status" value="1"/>
</dbReference>
<dbReference type="Gene3D" id="1.10.287.70">
    <property type="match status" value="1"/>
</dbReference>
<dbReference type="Gene3D" id="1.20.120.80">
    <property type="entry name" value="Cytochrome c oxidase, subunit III, four-helix bundle"/>
    <property type="match status" value="1"/>
</dbReference>
<dbReference type="InterPro" id="IPR024791">
    <property type="entry name" value="Cyt_c/ubiquinol_Oxase_su3"/>
</dbReference>
<dbReference type="InterPro" id="IPR033945">
    <property type="entry name" value="Cyt_c_oxase_su3_dom"/>
</dbReference>
<dbReference type="InterPro" id="IPR000298">
    <property type="entry name" value="Cyt_c_oxidase-like_su3"/>
</dbReference>
<dbReference type="InterPro" id="IPR035973">
    <property type="entry name" value="Cyt_c_oxidase_su3-like_sf"/>
</dbReference>
<dbReference type="InterPro" id="IPR013833">
    <property type="entry name" value="Cyt_c_oxidase_su3_a-hlx"/>
</dbReference>
<dbReference type="PANTHER" id="PTHR11403:SF7">
    <property type="entry name" value="CYTOCHROME C OXIDASE SUBUNIT 3"/>
    <property type="match status" value="1"/>
</dbReference>
<dbReference type="PANTHER" id="PTHR11403">
    <property type="entry name" value="CYTOCHROME C OXIDASE SUBUNIT III"/>
    <property type="match status" value="1"/>
</dbReference>
<dbReference type="Pfam" id="PF00510">
    <property type="entry name" value="COX3"/>
    <property type="match status" value="1"/>
</dbReference>
<dbReference type="SUPFAM" id="SSF81452">
    <property type="entry name" value="Cytochrome c oxidase subunit III-like"/>
    <property type="match status" value="1"/>
</dbReference>
<dbReference type="PROSITE" id="PS50253">
    <property type="entry name" value="COX3"/>
    <property type="match status" value="1"/>
</dbReference>
<name>COX3_RICPR</name>
<proteinExistence type="inferred from homology"/>
<sequence length="278" mass="31480">MNPNSNSITKSHLFHIVNPSPWPILTSFALLLLVIGGISSMHGYKFNMYILSAGVISVIYCLYSWWRDVVQEGIVEHQHTSPVRKGLKIGMVLFILTETVFFSVFFASFLKSSISPVGILDGVWVVKQGIWPPPTIKTFDPFDIPFINTLILLLSGTTITGAHYALEEKNQKDCVTALAFTIVLGIFFTLMQVYEYYHAEFKFTDGIYASNFYLATGFHGAHVVIGTIFLIVCYFRAKRGDFTTEGNGHLGFEFAAWYWHFVDVVWLFLFTFVYILGS</sequence>
<evidence type="ECO:0000255" key="1"/>
<evidence type="ECO:0000305" key="2"/>
<comment type="catalytic activity">
    <reaction>
        <text>4 Fe(II)-[cytochrome c] + O2 + 8 H(+)(in) = 4 Fe(III)-[cytochrome c] + 2 H2O + 4 H(+)(out)</text>
        <dbReference type="Rhea" id="RHEA:11436"/>
        <dbReference type="Rhea" id="RHEA-COMP:10350"/>
        <dbReference type="Rhea" id="RHEA-COMP:14399"/>
        <dbReference type="ChEBI" id="CHEBI:15377"/>
        <dbReference type="ChEBI" id="CHEBI:15378"/>
        <dbReference type="ChEBI" id="CHEBI:15379"/>
        <dbReference type="ChEBI" id="CHEBI:29033"/>
        <dbReference type="ChEBI" id="CHEBI:29034"/>
        <dbReference type="EC" id="7.1.1.9"/>
    </reaction>
</comment>
<comment type="subcellular location">
    <subcellularLocation>
        <location>Cell membrane</location>
        <topology>Multi-pass membrane protein</topology>
    </subcellularLocation>
</comment>
<comment type="similarity">
    <text evidence="2">Belongs to the cytochrome c oxidase subunit 3 family.</text>
</comment>
<protein>
    <recommendedName>
        <fullName>Probable cytochrome c oxidase subunit 3</fullName>
        <ecNumber>7.1.1.9</ecNumber>
    </recommendedName>
    <alternativeName>
        <fullName>Cytochrome aa3 subunit 3</fullName>
    </alternativeName>
    <alternativeName>
        <fullName>Cytochrome c oxidase polypeptide III</fullName>
    </alternativeName>
</protein>
<feature type="chain" id="PRO_0000183887" description="Probable cytochrome c oxidase subunit 3">
    <location>
        <begin position="1"/>
        <end position="278"/>
    </location>
</feature>
<feature type="transmembrane region" description="Helical" evidence="1">
    <location>
        <begin position="21"/>
        <end position="41"/>
    </location>
</feature>
<feature type="transmembrane region" description="Helical" evidence="1">
    <location>
        <begin position="46"/>
        <end position="66"/>
    </location>
</feature>
<feature type="transmembrane region" description="Helical" evidence="1">
    <location>
        <begin position="89"/>
        <end position="109"/>
    </location>
</feature>
<feature type="transmembrane region" description="Helical" evidence="1">
    <location>
        <begin position="174"/>
        <end position="194"/>
    </location>
</feature>
<feature type="transmembrane region" description="Helical" evidence="1">
    <location>
        <begin position="212"/>
        <end position="232"/>
    </location>
</feature>
<feature type="transmembrane region" description="Helical" evidence="1">
    <location>
        <begin position="256"/>
        <end position="276"/>
    </location>
</feature>
<accession>Q9ZDX3</accession>
<organism>
    <name type="scientific">Rickettsia prowazekii (strain Madrid E)</name>
    <dbReference type="NCBI Taxonomy" id="272947"/>
    <lineage>
        <taxon>Bacteria</taxon>
        <taxon>Pseudomonadati</taxon>
        <taxon>Pseudomonadota</taxon>
        <taxon>Alphaproteobacteria</taxon>
        <taxon>Rickettsiales</taxon>
        <taxon>Rickettsiaceae</taxon>
        <taxon>Rickettsieae</taxon>
        <taxon>Rickettsia</taxon>
        <taxon>typhus group</taxon>
    </lineage>
</organism>